<keyword id="KW-0378">Hydrolase</keyword>
<keyword id="KW-0479">Metal-binding</keyword>
<keyword id="KW-0659">Purine metabolism</keyword>
<keyword id="KW-0862">Zinc</keyword>
<accession>Q5PCG0</accession>
<dbReference type="EC" id="3.5.2.5" evidence="1"/>
<dbReference type="EMBL" id="CP000026">
    <property type="protein sequence ID" value="AAV78088.1"/>
    <property type="molecule type" value="Genomic_DNA"/>
</dbReference>
<dbReference type="RefSeq" id="WP_000006865.1">
    <property type="nucleotide sequence ID" value="NC_006511.1"/>
</dbReference>
<dbReference type="SMR" id="Q5PCG0"/>
<dbReference type="KEGG" id="spt:SPA2200"/>
<dbReference type="HOGENOM" id="CLU_015572_4_2_6"/>
<dbReference type="UniPathway" id="UPA00395">
    <property type="reaction ID" value="UER00653"/>
</dbReference>
<dbReference type="Proteomes" id="UP000008185">
    <property type="component" value="Chromosome"/>
</dbReference>
<dbReference type="GO" id="GO:0005737">
    <property type="term" value="C:cytoplasm"/>
    <property type="evidence" value="ECO:0007669"/>
    <property type="project" value="TreeGrafter"/>
</dbReference>
<dbReference type="GO" id="GO:0004038">
    <property type="term" value="F:allantoinase activity"/>
    <property type="evidence" value="ECO:0007669"/>
    <property type="project" value="UniProtKB-UniRule"/>
</dbReference>
<dbReference type="GO" id="GO:0050897">
    <property type="term" value="F:cobalt ion binding"/>
    <property type="evidence" value="ECO:0007669"/>
    <property type="project" value="InterPro"/>
</dbReference>
<dbReference type="GO" id="GO:0008270">
    <property type="term" value="F:zinc ion binding"/>
    <property type="evidence" value="ECO:0007669"/>
    <property type="project" value="InterPro"/>
</dbReference>
<dbReference type="GO" id="GO:0000256">
    <property type="term" value="P:allantoin catabolic process"/>
    <property type="evidence" value="ECO:0007669"/>
    <property type="project" value="UniProtKB-UniRule"/>
</dbReference>
<dbReference type="GO" id="GO:0006145">
    <property type="term" value="P:purine nucleobase catabolic process"/>
    <property type="evidence" value="ECO:0007669"/>
    <property type="project" value="TreeGrafter"/>
</dbReference>
<dbReference type="CDD" id="cd01315">
    <property type="entry name" value="L-HYD_ALN"/>
    <property type="match status" value="1"/>
</dbReference>
<dbReference type="FunFam" id="3.20.20.140:FF:000013">
    <property type="entry name" value="Allantoinase"/>
    <property type="match status" value="1"/>
</dbReference>
<dbReference type="Gene3D" id="3.20.20.140">
    <property type="entry name" value="Metal-dependent hydrolases"/>
    <property type="match status" value="1"/>
</dbReference>
<dbReference type="HAMAP" id="MF_01645">
    <property type="entry name" value="Hydantoinase"/>
    <property type="match status" value="1"/>
</dbReference>
<dbReference type="InterPro" id="IPR017593">
    <property type="entry name" value="Allantoinase"/>
</dbReference>
<dbReference type="InterPro" id="IPR047604">
    <property type="entry name" value="Allantoinase_bact"/>
</dbReference>
<dbReference type="InterPro" id="IPR006680">
    <property type="entry name" value="Amidohydro-rel"/>
</dbReference>
<dbReference type="InterPro" id="IPR050138">
    <property type="entry name" value="DHOase/Allantoinase_Hydrolase"/>
</dbReference>
<dbReference type="InterPro" id="IPR011059">
    <property type="entry name" value="Metal-dep_hydrolase_composite"/>
</dbReference>
<dbReference type="InterPro" id="IPR032466">
    <property type="entry name" value="Metal_Hydrolase"/>
</dbReference>
<dbReference type="NCBIfam" id="TIGR03178">
    <property type="entry name" value="allantoinase"/>
    <property type="match status" value="1"/>
</dbReference>
<dbReference type="NCBIfam" id="NF005960">
    <property type="entry name" value="PRK08044.1"/>
    <property type="match status" value="1"/>
</dbReference>
<dbReference type="PANTHER" id="PTHR43668">
    <property type="entry name" value="ALLANTOINASE"/>
    <property type="match status" value="1"/>
</dbReference>
<dbReference type="PANTHER" id="PTHR43668:SF4">
    <property type="entry name" value="ALLANTOINASE"/>
    <property type="match status" value="1"/>
</dbReference>
<dbReference type="Pfam" id="PF01979">
    <property type="entry name" value="Amidohydro_1"/>
    <property type="match status" value="1"/>
</dbReference>
<dbReference type="SUPFAM" id="SSF51338">
    <property type="entry name" value="Composite domain of metallo-dependent hydrolases"/>
    <property type="match status" value="1"/>
</dbReference>
<dbReference type="SUPFAM" id="SSF51556">
    <property type="entry name" value="Metallo-dependent hydrolases"/>
    <property type="match status" value="1"/>
</dbReference>
<proteinExistence type="inferred from homology"/>
<sequence>MSFDLIIKNGTVILENEARVIDIAVQGGKIAAIGENLGEAKNVLDATGLIVSPGMVDAHTHISEPGRTHWEGYETGTRAAAKGGITTMIEMPLNQLPATVDRETIELKFDAAKGKLTIDAAQLGGLVSYNLDRLHELDEVGVVGFKCFVATCGDRGIDNDFRDVNDWQFYKGAQKLGEMDQTVLVHCENALICDELGEEAKREGRVTAHDYVASRPVFTEVEAIRRVLYLAKAAGCRLHVCHISSPEGVEEVTRARQEGQDVTCESCPHYFVLDTDQFEEIGTLAKCSPPIRDQENQKGMWEKLFNGEIDCLVSDHSPCPPEMKAGNIMQAWGGIAGLQNCMDVMFDEAVQKRGMSLPMFGKLMATNAADIFGLKHKGRIAPGKDADLVFIQPDSSYVLKNEDLEYRHKVSPYVGRTIGARITKTILRGDVIYDIEHGFPVPPKGQFILKHQQ</sequence>
<reference key="1">
    <citation type="journal article" date="2004" name="Nat. Genet.">
        <title>Comparison of genome degradation in Paratyphi A and Typhi, human-restricted serovars of Salmonella enterica that cause typhoid.</title>
        <authorList>
            <person name="McClelland M."/>
            <person name="Sanderson K.E."/>
            <person name="Clifton S.W."/>
            <person name="Latreille P."/>
            <person name="Porwollik S."/>
            <person name="Sabo A."/>
            <person name="Meyer R."/>
            <person name="Bieri T."/>
            <person name="Ozersky P."/>
            <person name="McLellan M."/>
            <person name="Harkins C.R."/>
            <person name="Wang C."/>
            <person name="Nguyen C."/>
            <person name="Berghoff A."/>
            <person name="Elliott G."/>
            <person name="Kohlberg S."/>
            <person name="Strong C."/>
            <person name="Du F."/>
            <person name="Carter J."/>
            <person name="Kremizki C."/>
            <person name="Layman D."/>
            <person name="Leonard S."/>
            <person name="Sun H."/>
            <person name="Fulton L."/>
            <person name="Nash W."/>
            <person name="Miner T."/>
            <person name="Minx P."/>
            <person name="Delehaunty K."/>
            <person name="Fronick C."/>
            <person name="Magrini V."/>
            <person name="Nhan M."/>
            <person name="Warren W."/>
            <person name="Florea L."/>
            <person name="Spieth J."/>
            <person name="Wilson R.K."/>
        </authorList>
    </citation>
    <scope>NUCLEOTIDE SEQUENCE [LARGE SCALE GENOMIC DNA]</scope>
    <source>
        <strain>ATCC 9150 / SARB42</strain>
    </source>
</reference>
<protein>
    <recommendedName>
        <fullName evidence="1">Allantoinase</fullName>
        <ecNumber evidence="1">3.5.2.5</ecNumber>
    </recommendedName>
    <alternativeName>
        <fullName evidence="1">Allantoin-utilizing enzyme</fullName>
    </alternativeName>
</protein>
<organism>
    <name type="scientific">Salmonella paratyphi A (strain ATCC 9150 / SARB42)</name>
    <dbReference type="NCBI Taxonomy" id="295319"/>
    <lineage>
        <taxon>Bacteria</taxon>
        <taxon>Pseudomonadati</taxon>
        <taxon>Pseudomonadota</taxon>
        <taxon>Gammaproteobacteria</taxon>
        <taxon>Enterobacterales</taxon>
        <taxon>Enterobacteriaceae</taxon>
        <taxon>Salmonella</taxon>
    </lineage>
</organism>
<name>ALLB_SALPA</name>
<gene>
    <name evidence="1" type="primary">allB</name>
    <name type="ordered locus">SPA2200</name>
</gene>
<feature type="chain" id="PRO_0000317683" description="Allantoinase">
    <location>
        <begin position="1"/>
        <end position="453"/>
    </location>
</feature>
<feature type="binding site" evidence="1">
    <location>
        <position position="59"/>
    </location>
    <ligand>
        <name>Zn(2+)</name>
        <dbReference type="ChEBI" id="CHEBI:29105"/>
        <label>1</label>
    </ligand>
</feature>
<feature type="binding site" evidence="1">
    <location>
        <position position="61"/>
    </location>
    <ligand>
        <name>Zn(2+)</name>
        <dbReference type="ChEBI" id="CHEBI:29105"/>
        <label>1</label>
    </ligand>
</feature>
<feature type="binding site" description="via carbamate group" evidence="1">
    <location>
        <position position="146"/>
    </location>
    <ligand>
        <name>Zn(2+)</name>
        <dbReference type="ChEBI" id="CHEBI:29105"/>
        <label>1</label>
    </ligand>
</feature>
<feature type="binding site" description="via carbamate group" evidence="1">
    <location>
        <position position="146"/>
    </location>
    <ligand>
        <name>Zn(2+)</name>
        <dbReference type="ChEBI" id="CHEBI:29105"/>
        <label>2</label>
    </ligand>
</feature>
<feature type="binding site" evidence="1">
    <location>
        <position position="186"/>
    </location>
    <ligand>
        <name>Zn(2+)</name>
        <dbReference type="ChEBI" id="CHEBI:29105"/>
        <label>2</label>
    </ligand>
</feature>
<feature type="binding site" evidence="1">
    <location>
        <position position="242"/>
    </location>
    <ligand>
        <name>Zn(2+)</name>
        <dbReference type="ChEBI" id="CHEBI:29105"/>
        <label>2</label>
    </ligand>
</feature>
<feature type="binding site" evidence="1">
    <location>
        <position position="315"/>
    </location>
    <ligand>
        <name>Zn(2+)</name>
        <dbReference type="ChEBI" id="CHEBI:29105"/>
        <label>1</label>
    </ligand>
</feature>
<feature type="modified residue" description="N6-carboxylysine" evidence="1">
    <location>
        <position position="146"/>
    </location>
</feature>
<evidence type="ECO:0000255" key="1">
    <source>
        <dbReference type="HAMAP-Rule" id="MF_01645"/>
    </source>
</evidence>
<comment type="function">
    <text evidence="1">Catalyzes the conversion of allantoin (5-ureidohydantoin) to allantoic acid by hydrolytic cleavage of the five-member hydantoin ring.</text>
</comment>
<comment type="catalytic activity">
    <reaction evidence="1">
        <text>(S)-allantoin + H2O = allantoate + H(+)</text>
        <dbReference type="Rhea" id="RHEA:17029"/>
        <dbReference type="ChEBI" id="CHEBI:15377"/>
        <dbReference type="ChEBI" id="CHEBI:15378"/>
        <dbReference type="ChEBI" id="CHEBI:15678"/>
        <dbReference type="ChEBI" id="CHEBI:17536"/>
        <dbReference type="EC" id="3.5.2.5"/>
    </reaction>
</comment>
<comment type="cofactor">
    <cofactor evidence="1">
        <name>Zn(2+)</name>
        <dbReference type="ChEBI" id="CHEBI:29105"/>
    </cofactor>
    <text evidence="1">Binds 2 Zn(2+) ions per subunit.</text>
</comment>
<comment type="pathway">
    <text evidence="1">Nitrogen metabolism; (S)-allantoin degradation; allantoate from (S)-allantoin: step 1/1.</text>
</comment>
<comment type="subunit">
    <text evidence="1">Homotetramer.</text>
</comment>
<comment type="PTM">
    <text evidence="1">Carboxylation allows a single lysine to coordinate two zinc ions.</text>
</comment>
<comment type="similarity">
    <text evidence="1">Belongs to the metallo-dependent hydrolases superfamily. Allantoinase family.</text>
</comment>